<reference key="1">
    <citation type="submission" date="2006-10" db="EMBL/GenBank/DDBJ databases">
        <authorList>
            <person name="Fleischmann R.D."/>
            <person name="Dodson R.J."/>
            <person name="Haft D.H."/>
            <person name="Merkel J.S."/>
            <person name="Nelson W.C."/>
            <person name="Fraser C.M."/>
        </authorList>
    </citation>
    <scope>NUCLEOTIDE SEQUENCE [LARGE SCALE GENOMIC DNA]</scope>
    <source>
        <strain>104</strain>
    </source>
</reference>
<name>MURC_MYCA1</name>
<dbReference type="EC" id="6.3.2.8" evidence="1"/>
<dbReference type="EMBL" id="CP000479">
    <property type="protein sequence ID" value="ABK65704.1"/>
    <property type="molecule type" value="Genomic_DNA"/>
</dbReference>
<dbReference type="RefSeq" id="WP_011724733.1">
    <property type="nucleotide sequence ID" value="NC_008595.1"/>
</dbReference>
<dbReference type="SMR" id="A0QF53"/>
<dbReference type="KEGG" id="mav:MAV_2337"/>
<dbReference type="HOGENOM" id="CLU_028104_2_1_11"/>
<dbReference type="UniPathway" id="UPA00219"/>
<dbReference type="Proteomes" id="UP000001574">
    <property type="component" value="Chromosome"/>
</dbReference>
<dbReference type="GO" id="GO:0005737">
    <property type="term" value="C:cytoplasm"/>
    <property type="evidence" value="ECO:0007669"/>
    <property type="project" value="UniProtKB-SubCell"/>
</dbReference>
<dbReference type="GO" id="GO:0005524">
    <property type="term" value="F:ATP binding"/>
    <property type="evidence" value="ECO:0007669"/>
    <property type="project" value="UniProtKB-UniRule"/>
</dbReference>
<dbReference type="GO" id="GO:0008763">
    <property type="term" value="F:UDP-N-acetylmuramate-L-alanine ligase activity"/>
    <property type="evidence" value="ECO:0007669"/>
    <property type="project" value="UniProtKB-UniRule"/>
</dbReference>
<dbReference type="GO" id="GO:0051301">
    <property type="term" value="P:cell division"/>
    <property type="evidence" value="ECO:0007669"/>
    <property type="project" value="UniProtKB-KW"/>
</dbReference>
<dbReference type="GO" id="GO:0071555">
    <property type="term" value="P:cell wall organization"/>
    <property type="evidence" value="ECO:0007669"/>
    <property type="project" value="UniProtKB-KW"/>
</dbReference>
<dbReference type="GO" id="GO:0009252">
    <property type="term" value="P:peptidoglycan biosynthetic process"/>
    <property type="evidence" value="ECO:0007669"/>
    <property type="project" value="UniProtKB-UniRule"/>
</dbReference>
<dbReference type="GO" id="GO:0008360">
    <property type="term" value="P:regulation of cell shape"/>
    <property type="evidence" value="ECO:0007669"/>
    <property type="project" value="UniProtKB-KW"/>
</dbReference>
<dbReference type="FunFam" id="3.40.50.720:FF:000046">
    <property type="entry name" value="UDP-N-acetylmuramate--L-alanine ligase"/>
    <property type="match status" value="1"/>
</dbReference>
<dbReference type="Gene3D" id="3.90.190.20">
    <property type="entry name" value="Mur ligase, C-terminal domain"/>
    <property type="match status" value="1"/>
</dbReference>
<dbReference type="Gene3D" id="3.40.1190.10">
    <property type="entry name" value="Mur-like, catalytic domain"/>
    <property type="match status" value="1"/>
</dbReference>
<dbReference type="Gene3D" id="3.40.50.720">
    <property type="entry name" value="NAD(P)-binding Rossmann-like Domain"/>
    <property type="match status" value="1"/>
</dbReference>
<dbReference type="HAMAP" id="MF_00046">
    <property type="entry name" value="MurC"/>
    <property type="match status" value="1"/>
</dbReference>
<dbReference type="InterPro" id="IPR036565">
    <property type="entry name" value="Mur-like_cat_sf"/>
</dbReference>
<dbReference type="InterPro" id="IPR004101">
    <property type="entry name" value="Mur_ligase_C"/>
</dbReference>
<dbReference type="InterPro" id="IPR036615">
    <property type="entry name" value="Mur_ligase_C_dom_sf"/>
</dbReference>
<dbReference type="InterPro" id="IPR013221">
    <property type="entry name" value="Mur_ligase_cen"/>
</dbReference>
<dbReference type="InterPro" id="IPR000713">
    <property type="entry name" value="Mur_ligase_N"/>
</dbReference>
<dbReference type="InterPro" id="IPR050061">
    <property type="entry name" value="MurCDEF_pg_biosynth"/>
</dbReference>
<dbReference type="InterPro" id="IPR005758">
    <property type="entry name" value="UDP-N-AcMur_Ala_ligase_MurC"/>
</dbReference>
<dbReference type="NCBIfam" id="TIGR01082">
    <property type="entry name" value="murC"/>
    <property type="match status" value="1"/>
</dbReference>
<dbReference type="PANTHER" id="PTHR43445:SF3">
    <property type="entry name" value="UDP-N-ACETYLMURAMATE--L-ALANINE LIGASE"/>
    <property type="match status" value="1"/>
</dbReference>
<dbReference type="PANTHER" id="PTHR43445">
    <property type="entry name" value="UDP-N-ACETYLMURAMATE--L-ALANINE LIGASE-RELATED"/>
    <property type="match status" value="1"/>
</dbReference>
<dbReference type="Pfam" id="PF01225">
    <property type="entry name" value="Mur_ligase"/>
    <property type="match status" value="1"/>
</dbReference>
<dbReference type="Pfam" id="PF02875">
    <property type="entry name" value="Mur_ligase_C"/>
    <property type="match status" value="1"/>
</dbReference>
<dbReference type="Pfam" id="PF08245">
    <property type="entry name" value="Mur_ligase_M"/>
    <property type="match status" value="1"/>
</dbReference>
<dbReference type="SUPFAM" id="SSF51984">
    <property type="entry name" value="MurCD N-terminal domain"/>
    <property type="match status" value="1"/>
</dbReference>
<dbReference type="SUPFAM" id="SSF53623">
    <property type="entry name" value="MurD-like peptide ligases, catalytic domain"/>
    <property type="match status" value="1"/>
</dbReference>
<dbReference type="SUPFAM" id="SSF53244">
    <property type="entry name" value="MurD-like peptide ligases, peptide-binding domain"/>
    <property type="match status" value="1"/>
</dbReference>
<keyword id="KW-0067">ATP-binding</keyword>
<keyword id="KW-0131">Cell cycle</keyword>
<keyword id="KW-0132">Cell division</keyword>
<keyword id="KW-0133">Cell shape</keyword>
<keyword id="KW-0961">Cell wall biogenesis/degradation</keyword>
<keyword id="KW-0963">Cytoplasm</keyword>
<keyword id="KW-0436">Ligase</keyword>
<keyword id="KW-0547">Nucleotide-binding</keyword>
<keyword id="KW-0573">Peptidoglycan synthesis</keyword>
<evidence type="ECO:0000255" key="1">
    <source>
        <dbReference type="HAMAP-Rule" id="MF_00046"/>
    </source>
</evidence>
<comment type="function">
    <text evidence="1">Cell wall formation.</text>
</comment>
<comment type="catalytic activity">
    <reaction evidence="1">
        <text>UDP-N-acetyl-alpha-D-muramate + L-alanine + ATP = UDP-N-acetyl-alpha-D-muramoyl-L-alanine + ADP + phosphate + H(+)</text>
        <dbReference type="Rhea" id="RHEA:23372"/>
        <dbReference type="ChEBI" id="CHEBI:15378"/>
        <dbReference type="ChEBI" id="CHEBI:30616"/>
        <dbReference type="ChEBI" id="CHEBI:43474"/>
        <dbReference type="ChEBI" id="CHEBI:57972"/>
        <dbReference type="ChEBI" id="CHEBI:70757"/>
        <dbReference type="ChEBI" id="CHEBI:83898"/>
        <dbReference type="ChEBI" id="CHEBI:456216"/>
        <dbReference type="EC" id="6.3.2.8"/>
    </reaction>
</comment>
<comment type="pathway">
    <text evidence="1">Cell wall biogenesis; peptidoglycan biosynthesis.</text>
</comment>
<comment type="subcellular location">
    <subcellularLocation>
        <location evidence="1">Cytoplasm</location>
    </subcellularLocation>
</comment>
<comment type="similarity">
    <text evidence="1">Belongs to the MurCDEF family.</text>
</comment>
<sequence>MTTDQLPAELERVHMVGIGGAGMSGIARILLDRGGLVSGSDAKESRGIHALRARGAQIRIGHDASSLDLLPGGPTAVITTHAAIPKTNPELVEARRRGIPVILRPAVLAKLMDGRTTLMVTGTHGKTTTTSMLIVALQHCGRDPSFAVGGEMGEAGTNAHHGSGDCFVAEADESDGSLLEYTPDVAVVTNIETDHLDFYGSADAYVAVFDAFVERLAPGGALVVCVDDPGAAALARRTAELGIRVLRYGSGPHGQAPSGEPLAATLVSWQQQGTEAVAQIRLAGEQQHPLVMRLSVPGRHMALNALGALLAAIEIGAPTEAVLDGLAGFEGVRRRFELVGTAGGSAPSSTVRVFDDYAHHPTEIAATLAAVRTLLEQSGGGRSIAVFQPHLYSRTKAFAEEFGHALDAADEVFVLDVYGAREQPLAGVSGASVAEHVSVPVRYLPDFSAAAEQVAAAAAPGDVIVTMGAGDVTLLGPEIVTALRVRANRGAPGALR</sequence>
<gene>
    <name evidence="1" type="primary">murC</name>
    <name type="ordered locus">MAV_2337</name>
</gene>
<accession>A0QF53</accession>
<organism>
    <name type="scientific">Mycobacterium avium (strain 104)</name>
    <dbReference type="NCBI Taxonomy" id="243243"/>
    <lineage>
        <taxon>Bacteria</taxon>
        <taxon>Bacillati</taxon>
        <taxon>Actinomycetota</taxon>
        <taxon>Actinomycetes</taxon>
        <taxon>Mycobacteriales</taxon>
        <taxon>Mycobacteriaceae</taxon>
        <taxon>Mycobacterium</taxon>
        <taxon>Mycobacterium avium complex (MAC)</taxon>
    </lineage>
</organism>
<feature type="chain" id="PRO_1000004370" description="UDP-N-acetylmuramate--L-alanine ligase">
    <location>
        <begin position="1"/>
        <end position="496"/>
    </location>
</feature>
<feature type="binding site" evidence="1">
    <location>
        <begin position="122"/>
        <end position="128"/>
    </location>
    <ligand>
        <name>ATP</name>
        <dbReference type="ChEBI" id="CHEBI:30616"/>
    </ligand>
</feature>
<proteinExistence type="inferred from homology"/>
<protein>
    <recommendedName>
        <fullName evidence="1">UDP-N-acetylmuramate--L-alanine ligase</fullName>
        <ecNumber evidence="1">6.3.2.8</ecNumber>
    </recommendedName>
    <alternativeName>
        <fullName evidence="1">UDP-N-acetylmuramoyl-L-alanine synthetase</fullName>
    </alternativeName>
</protein>